<organism>
    <name type="scientific">Escherichia coli O9:H4 (strain HS)</name>
    <dbReference type="NCBI Taxonomy" id="331112"/>
    <lineage>
        <taxon>Bacteria</taxon>
        <taxon>Pseudomonadati</taxon>
        <taxon>Pseudomonadota</taxon>
        <taxon>Gammaproteobacteria</taxon>
        <taxon>Enterobacterales</taxon>
        <taxon>Enterobacteriaceae</taxon>
        <taxon>Escherichia</taxon>
    </lineage>
</organism>
<accession>A8A6L0</accession>
<comment type="function">
    <text evidence="1">Responsible for the low-affinity transport of potassium into the cell. Likely operates as a K(+):H(+) symporter.</text>
</comment>
<comment type="catalytic activity">
    <reaction evidence="1">
        <text>K(+)(in) + H(+)(in) = K(+)(out) + H(+)(out)</text>
        <dbReference type="Rhea" id="RHEA:28490"/>
        <dbReference type="ChEBI" id="CHEBI:15378"/>
        <dbReference type="ChEBI" id="CHEBI:29103"/>
    </reaction>
    <physiologicalReaction direction="right-to-left" evidence="1">
        <dbReference type="Rhea" id="RHEA:28492"/>
    </physiologicalReaction>
</comment>
<comment type="subcellular location">
    <subcellularLocation>
        <location evidence="1">Cell inner membrane</location>
        <topology evidence="1">Multi-pass membrane protein</topology>
    </subcellularLocation>
</comment>
<comment type="similarity">
    <text evidence="1">Belongs to the HAK/KUP transporter (TC 2.A.72) family.</text>
</comment>
<keyword id="KW-0997">Cell inner membrane</keyword>
<keyword id="KW-1003">Cell membrane</keyword>
<keyword id="KW-0406">Ion transport</keyword>
<keyword id="KW-0472">Membrane</keyword>
<keyword id="KW-0630">Potassium</keyword>
<keyword id="KW-0633">Potassium transport</keyword>
<keyword id="KW-0769">Symport</keyword>
<keyword id="KW-0812">Transmembrane</keyword>
<keyword id="KW-1133">Transmembrane helix</keyword>
<keyword id="KW-0813">Transport</keyword>
<evidence type="ECO:0000255" key="1">
    <source>
        <dbReference type="HAMAP-Rule" id="MF_01522"/>
    </source>
</evidence>
<gene>
    <name evidence="1" type="primary">kup</name>
    <name type="ordered locus">EcHS_A3963</name>
</gene>
<protein>
    <recommendedName>
        <fullName evidence="1">Low affinity potassium transport system protein Kup</fullName>
    </recommendedName>
    <alternativeName>
        <fullName evidence="1">Kup system potassium uptake protein</fullName>
    </alternativeName>
</protein>
<proteinExistence type="inferred from homology"/>
<dbReference type="EMBL" id="CP000802">
    <property type="protein sequence ID" value="ABV08164.1"/>
    <property type="molecule type" value="Genomic_DNA"/>
</dbReference>
<dbReference type="RefSeq" id="WP_000102319.1">
    <property type="nucleotide sequence ID" value="NC_009800.1"/>
</dbReference>
<dbReference type="GeneID" id="75205465"/>
<dbReference type="KEGG" id="ecx:EcHS_A3963"/>
<dbReference type="HOGENOM" id="CLU_008142_4_2_6"/>
<dbReference type="GO" id="GO:0005886">
    <property type="term" value="C:plasma membrane"/>
    <property type="evidence" value="ECO:0007669"/>
    <property type="project" value="UniProtKB-SubCell"/>
</dbReference>
<dbReference type="GO" id="GO:0015079">
    <property type="term" value="F:potassium ion transmembrane transporter activity"/>
    <property type="evidence" value="ECO:0007669"/>
    <property type="project" value="UniProtKB-UniRule"/>
</dbReference>
<dbReference type="GO" id="GO:0015293">
    <property type="term" value="F:symporter activity"/>
    <property type="evidence" value="ECO:0007669"/>
    <property type="project" value="UniProtKB-UniRule"/>
</dbReference>
<dbReference type="HAMAP" id="MF_01522">
    <property type="entry name" value="Kup"/>
    <property type="match status" value="1"/>
</dbReference>
<dbReference type="InterPro" id="IPR003855">
    <property type="entry name" value="K+_transporter"/>
</dbReference>
<dbReference type="InterPro" id="IPR053952">
    <property type="entry name" value="K_trans_C"/>
</dbReference>
<dbReference type="InterPro" id="IPR053951">
    <property type="entry name" value="K_trans_N"/>
</dbReference>
<dbReference type="InterPro" id="IPR023051">
    <property type="entry name" value="Kup"/>
</dbReference>
<dbReference type="NCBIfam" id="TIGR00794">
    <property type="entry name" value="kup"/>
    <property type="match status" value="1"/>
</dbReference>
<dbReference type="NCBIfam" id="NF008015">
    <property type="entry name" value="PRK10745.1"/>
    <property type="match status" value="1"/>
</dbReference>
<dbReference type="PANTHER" id="PTHR30540:SF79">
    <property type="entry name" value="LOW AFFINITY POTASSIUM TRANSPORT SYSTEM PROTEIN KUP"/>
    <property type="match status" value="1"/>
</dbReference>
<dbReference type="PANTHER" id="PTHR30540">
    <property type="entry name" value="OSMOTIC STRESS POTASSIUM TRANSPORTER"/>
    <property type="match status" value="1"/>
</dbReference>
<dbReference type="Pfam" id="PF02705">
    <property type="entry name" value="K_trans"/>
    <property type="match status" value="1"/>
</dbReference>
<dbReference type="Pfam" id="PF22776">
    <property type="entry name" value="K_trans_C"/>
    <property type="match status" value="1"/>
</dbReference>
<name>KUP_ECOHS</name>
<feature type="chain" id="PRO_1000068646" description="Low affinity potassium transport system protein Kup">
    <location>
        <begin position="1"/>
        <end position="622"/>
    </location>
</feature>
<feature type="transmembrane region" description="Helical" evidence="1">
    <location>
        <begin position="9"/>
        <end position="29"/>
    </location>
</feature>
<feature type="transmembrane region" description="Helical" evidence="1">
    <location>
        <begin position="49"/>
        <end position="69"/>
    </location>
</feature>
<feature type="transmembrane region" description="Helical" evidence="1">
    <location>
        <begin position="103"/>
        <end position="123"/>
    </location>
</feature>
<feature type="transmembrane region" description="Helical" evidence="1">
    <location>
        <begin position="137"/>
        <end position="157"/>
    </location>
</feature>
<feature type="transmembrane region" description="Helical" evidence="1">
    <location>
        <begin position="165"/>
        <end position="185"/>
    </location>
</feature>
<feature type="transmembrane region" description="Helical" evidence="1">
    <location>
        <begin position="213"/>
        <end position="233"/>
    </location>
</feature>
<feature type="transmembrane region" description="Helical" evidence="1">
    <location>
        <begin position="247"/>
        <end position="267"/>
    </location>
</feature>
<feature type="transmembrane region" description="Helical" evidence="1">
    <location>
        <begin position="276"/>
        <end position="296"/>
    </location>
</feature>
<feature type="transmembrane region" description="Helical" evidence="1">
    <location>
        <begin position="337"/>
        <end position="357"/>
    </location>
</feature>
<feature type="transmembrane region" description="Helical" evidence="1">
    <location>
        <begin position="363"/>
        <end position="383"/>
    </location>
</feature>
<feature type="transmembrane region" description="Helical" evidence="1">
    <location>
        <begin position="396"/>
        <end position="416"/>
    </location>
</feature>
<feature type="transmembrane region" description="Helical" evidence="1">
    <location>
        <begin position="419"/>
        <end position="439"/>
    </location>
</feature>
<sequence length="622" mass="69294">MSTDNKQSLPAITLAAIGVVYGDIGTSPLYTLRECLSGQFGFGVERDAVFGFLSLIFWLLIFVVSIKYLTFVMRADNAGEGGILTLMSLAGRNTSARTTSMLVIMGLIGGSFFYGEVVITPAISVMSAIEGLEIVAPQLDTWIVPLSIIVLTLLFMIQKHGTAMVGKLFAPIMLTWFLILAGLGLRSIIANPEVLHALNPMWAVHFFLEYKTVSFIALGAVVLSITGVEALYADMGHFGKFPIRLAWFTVVLPSLTLNYFGQGALLLKNPEAIKNPFFLLAPDWALIPLLIIAALATVIASQAVISGVFSLTRQAVRLGYLSPMRIIHTSEMESGQIYIPFVNWMLYVAVVIVIVSFEHSSNLAAAYGIAVTGTMVLTSILSTTVARQNWHWNKYFVALILIAFLCVDIPLFTANLDKLLSGGWLPLSLGTVMFIVMTTWKSERFRLLRRMHEHGNSLEAMIASLEKSPPVRVPGTAVYMSRAINVIPFALMHNLKHNKVLHERVILLTLRTEDAPYVHNVRRVQIEQLSPTFWRVVASYGWRETPNVEEVFHRCGLEGLSCRMMETSFFMSHESLILGKRPWYLRLRGKLYLLLQRNALRAPDQFEIPPNRVIELGTQVEI</sequence>
<reference key="1">
    <citation type="journal article" date="2008" name="J. Bacteriol.">
        <title>The pangenome structure of Escherichia coli: comparative genomic analysis of E. coli commensal and pathogenic isolates.</title>
        <authorList>
            <person name="Rasko D.A."/>
            <person name="Rosovitz M.J."/>
            <person name="Myers G.S.A."/>
            <person name="Mongodin E.F."/>
            <person name="Fricke W.F."/>
            <person name="Gajer P."/>
            <person name="Crabtree J."/>
            <person name="Sebaihia M."/>
            <person name="Thomson N.R."/>
            <person name="Chaudhuri R."/>
            <person name="Henderson I.R."/>
            <person name="Sperandio V."/>
            <person name="Ravel J."/>
        </authorList>
    </citation>
    <scope>NUCLEOTIDE SEQUENCE [LARGE SCALE GENOMIC DNA]</scope>
    <source>
        <strain>HS</strain>
    </source>
</reference>